<accession>P87314</accession>
<accession>Q9US78</accession>
<reference key="1">
    <citation type="journal article" date="2002" name="Nature">
        <title>The genome sequence of Schizosaccharomyces pombe.</title>
        <authorList>
            <person name="Wood V."/>
            <person name="Gwilliam R."/>
            <person name="Rajandream M.A."/>
            <person name="Lyne M.H."/>
            <person name="Lyne R."/>
            <person name="Stewart A."/>
            <person name="Sgouros J.G."/>
            <person name="Peat N."/>
            <person name="Hayles J."/>
            <person name="Baker S.G."/>
            <person name="Basham D."/>
            <person name="Bowman S."/>
            <person name="Brooks K."/>
            <person name="Brown D."/>
            <person name="Brown S."/>
            <person name="Chillingworth T."/>
            <person name="Churcher C.M."/>
            <person name="Collins M."/>
            <person name="Connor R."/>
            <person name="Cronin A."/>
            <person name="Davis P."/>
            <person name="Feltwell T."/>
            <person name="Fraser A."/>
            <person name="Gentles S."/>
            <person name="Goble A."/>
            <person name="Hamlin N."/>
            <person name="Harris D.E."/>
            <person name="Hidalgo J."/>
            <person name="Hodgson G."/>
            <person name="Holroyd S."/>
            <person name="Hornsby T."/>
            <person name="Howarth S."/>
            <person name="Huckle E.J."/>
            <person name="Hunt S."/>
            <person name="Jagels K."/>
            <person name="James K.D."/>
            <person name="Jones L."/>
            <person name="Jones M."/>
            <person name="Leather S."/>
            <person name="McDonald S."/>
            <person name="McLean J."/>
            <person name="Mooney P."/>
            <person name="Moule S."/>
            <person name="Mungall K.L."/>
            <person name="Murphy L.D."/>
            <person name="Niblett D."/>
            <person name="Odell C."/>
            <person name="Oliver K."/>
            <person name="O'Neil S."/>
            <person name="Pearson D."/>
            <person name="Quail M.A."/>
            <person name="Rabbinowitsch E."/>
            <person name="Rutherford K.M."/>
            <person name="Rutter S."/>
            <person name="Saunders D."/>
            <person name="Seeger K."/>
            <person name="Sharp S."/>
            <person name="Skelton J."/>
            <person name="Simmonds M.N."/>
            <person name="Squares R."/>
            <person name="Squares S."/>
            <person name="Stevens K."/>
            <person name="Taylor K."/>
            <person name="Taylor R.G."/>
            <person name="Tivey A."/>
            <person name="Walsh S.V."/>
            <person name="Warren T."/>
            <person name="Whitehead S."/>
            <person name="Woodward J.R."/>
            <person name="Volckaert G."/>
            <person name="Aert R."/>
            <person name="Robben J."/>
            <person name="Grymonprez B."/>
            <person name="Weltjens I."/>
            <person name="Vanstreels E."/>
            <person name="Rieger M."/>
            <person name="Schaefer M."/>
            <person name="Mueller-Auer S."/>
            <person name="Gabel C."/>
            <person name="Fuchs M."/>
            <person name="Duesterhoeft A."/>
            <person name="Fritzc C."/>
            <person name="Holzer E."/>
            <person name="Moestl D."/>
            <person name="Hilbert H."/>
            <person name="Borzym K."/>
            <person name="Langer I."/>
            <person name="Beck A."/>
            <person name="Lehrach H."/>
            <person name="Reinhardt R."/>
            <person name="Pohl T.M."/>
            <person name="Eger P."/>
            <person name="Zimmermann W."/>
            <person name="Wedler H."/>
            <person name="Wambutt R."/>
            <person name="Purnelle B."/>
            <person name="Goffeau A."/>
            <person name="Cadieu E."/>
            <person name="Dreano S."/>
            <person name="Gloux S."/>
            <person name="Lelaure V."/>
            <person name="Mottier S."/>
            <person name="Galibert F."/>
            <person name="Aves S.J."/>
            <person name="Xiang Z."/>
            <person name="Hunt C."/>
            <person name="Moore K."/>
            <person name="Hurst S.M."/>
            <person name="Lucas M."/>
            <person name="Rochet M."/>
            <person name="Gaillardin C."/>
            <person name="Tallada V.A."/>
            <person name="Garzon A."/>
            <person name="Thode G."/>
            <person name="Daga R.R."/>
            <person name="Cruzado L."/>
            <person name="Jimenez J."/>
            <person name="Sanchez M."/>
            <person name="del Rey F."/>
            <person name="Benito J."/>
            <person name="Dominguez A."/>
            <person name="Revuelta J.L."/>
            <person name="Moreno S."/>
            <person name="Armstrong J."/>
            <person name="Forsburg S.L."/>
            <person name="Cerutti L."/>
            <person name="Lowe T."/>
            <person name="McCombie W.R."/>
            <person name="Paulsen I."/>
            <person name="Potashkin J."/>
            <person name="Shpakovski G.V."/>
            <person name="Ussery D."/>
            <person name="Barrell B.G."/>
            <person name="Nurse P."/>
        </authorList>
    </citation>
    <scope>NUCLEOTIDE SEQUENCE [LARGE SCALE GENOMIC DNA]</scope>
    <source>
        <strain>972 / ATCC 24843</strain>
    </source>
</reference>
<reference key="2">
    <citation type="journal article" date="2000" name="Genes Cells">
        <title>Large-scale screening of intracellular protein localization in living fission yeast cells by the use of a GFP-fusion genomic DNA library.</title>
        <authorList>
            <person name="Ding D.-Q."/>
            <person name="Tomita Y."/>
            <person name="Yamamoto A."/>
            <person name="Chikashige Y."/>
            <person name="Haraguchi T."/>
            <person name="Hiraoka Y."/>
        </authorList>
    </citation>
    <scope>NUCLEOTIDE SEQUENCE [LARGE SCALE GENOMIC DNA] OF 758-920</scope>
    <scope>SUBCELLULAR LOCATION</scope>
    <source>
        <strain>ATCC 38364 / 968</strain>
    </source>
</reference>
<reference key="3">
    <citation type="journal article" date="2004" name="Mol. Cell. Biol.">
        <title>The Schizosaccharomyces pombe HIRA-like protein Hip1 is required for the periodic expression of histone genes and contributes to the function of complex centromeres.</title>
        <authorList>
            <person name="Blackwell C."/>
            <person name="Martin K.A."/>
            <person name="Greenall A."/>
            <person name="Pidoux A."/>
            <person name="Allshire R.C."/>
            <person name="Whitehall S.K."/>
        </authorList>
    </citation>
    <scope>FUNCTION</scope>
    <scope>INTERACTION WITH SLM9</scope>
    <scope>SUBCELLULAR LOCATION</scope>
</reference>
<reference key="4">
    <citation type="journal article" date="2006" name="J. Biol. Chem.">
        <title>Hip3 interacts with the HIRA proteins Hip1 and Slm9 and is required for transcriptional silencing and accurate chromosome segregation.</title>
        <authorList>
            <person name="Greenall A."/>
            <person name="Williams E.S."/>
            <person name="Martin K.A."/>
            <person name="Palmer J.M."/>
            <person name="Gray J."/>
            <person name="Liu C."/>
            <person name="Whitehall S.K."/>
        </authorList>
    </citation>
    <scope>FUNCTION</scope>
    <scope>INTERACTION WITH HIP3</scope>
</reference>
<reference key="5">
    <citation type="journal article" date="2006" name="Nat. Biotechnol.">
        <title>ORFeome cloning and global analysis of protein localization in the fission yeast Schizosaccharomyces pombe.</title>
        <authorList>
            <person name="Matsuyama A."/>
            <person name="Arai R."/>
            <person name="Yashiroda Y."/>
            <person name="Shirai A."/>
            <person name="Kamata A."/>
            <person name="Sekido S."/>
            <person name="Kobayashi Y."/>
            <person name="Hashimoto A."/>
            <person name="Hamamoto M."/>
            <person name="Hiraoka Y."/>
            <person name="Horinouchi S."/>
            <person name="Yoshida M."/>
        </authorList>
    </citation>
    <scope>SUBCELLULAR LOCATION [LARGE SCALE ANALYSIS]</scope>
</reference>
<organism>
    <name type="scientific">Schizosaccharomyces pombe (strain 972 / ATCC 24843)</name>
    <name type="common">Fission yeast</name>
    <dbReference type="NCBI Taxonomy" id="284812"/>
    <lineage>
        <taxon>Eukaryota</taxon>
        <taxon>Fungi</taxon>
        <taxon>Dikarya</taxon>
        <taxon>Ascomycota</taxon>
        <taxon>Taphrinomycotina</taxon>
        <taxon>Schizosaccharomycetes</taxon>
        <taxon>Schizosaccharomycetales</taxon>
        <taxon>Schizosaccharomycetaceae</taxon>
        <taxon>Schizosaccharomyces</taxon>
    </lineage>
</organism>
<dbReference type="EMBL" id="CU329671">
    <property type="protein sequence ID" value="CAB10089.1"/>
    <property type="molecule type" value="Genomic_DNA"/>
</dbReference>
<dbReference type="EMBL" id="AB027992">
    <property type="protein sequence ID" value="BAA87296.1"/>
    <property type="molecule type" value="Genomic_DNA"/>
</dbReference>
<dbReference type="PIR" id="T40216">
    <property type="entry name" value="T40216"/>
</dbReference>
<dbReference type="RefSeq" id="NP_596575.1">
    <property type="nucleotide sequence ID" value="NM_001022496.2"/>
</dbReference>
<dbReference type="PDB" id="2Z34">
    <property type="method" value="X-ray"/>
    <property type="resolution" value="2.40 A"/>
    <property type="chains" value="C/D=469-497"/>
</dbReference>
<dbReference type="PDBsum" id="2Z34"/>
<dbReference type="SMR" id="P87314"/>
<dbReference type="BioGRID" id="276752">
    <property type="interactions" value="301"/>
</dbReference>
<dbReference type="FunCoup" id="P87314">
    <property type="interactions" value="418"/>
</dbReference>
<dbReference type="IntAct" id="P87314">
    <property type="interactions" value="2"/>
</dbReference>
<dbReference type="STRING" id="284812.P87314"/>
<dbReference type="iPTMnet" id="P87314"/>
<dbReference type="PaxDb" id="4896-SPBC31F10.13c.1"/>
<dbReference type="EnsemblFungi" id="SPBC31F10.13c.1">
    <property type="protein sequence ID" value="SPBC31F10.13c.1:pep"/>
    <property type="gene ID" value="SPBC31F10.13c"/>
</dbReference>
<dbReference type="GeneID" id="2540219"/>
<dbReference type="KEGG" id="spo:2540219"/>
<dbReference type="PomBase" id="SPBC31F10.13c">
    <property type="gene designation" value="hip1"/>
</dbReference>
<dbReference type="VEuPathDB" id="FungiDB:SPBC31F10.13c"/>
<dbReference type="eggNOG" id="KOG0973">
    <property type="taxonomic scope" value="Eukaryota"/>
</dbReference>
<dbReference type="HOGENOM" id="CLU_004372_3_0_1"/>
<dbReference type="InParanoid" id="P87314"/>
<dbReference type="OMA" id="RGSWDGD"/>
<dbReference type="PhylomeDB" id="P87314"/>
<dbReference type="PRO" id="PR:P87314"/>
<dbReference type="Proteomes" id="UP000002485">
    <property type="component" value="Chromosome II"/>
</dbReference>
<dbReference type="GO" id="GO:0000785">
    <property type="term" value="C:chromatin"/>
    <property type="evidence" value="ECO:0000318"/>
    <property type="project" value="GO_Central"/>
</dbReference>
<dbReference type="GO" id="GO:0005829">
    <property type="term" value="C:cytosol"/>
    <property type="evidence" value="ECO:0007005"/>
    <property type="project" value="PomBase"/>
</dbReference>
<dbReference type="GO" id="GO:0000417">
    <property type="term" value="C:HIR complex"/>
    <property type="evidence" value="ECO:0000314"/>
    <property type="project" value="PomBase"/>
</dbReference>
<dbReference type="GO" id="GO:0005634">
    <property type="term" value="C:nucleus"/>
    <property type="evidence" value="ECO:0000314"/>
    <property type="project" value="PomBase"/>
</dbReference>
<dbReference type="GO" id="GO:0006325">
    <property type="term" value="P:chromatin organization"/>
    <property type="evidence" value="ECO:0000315"/>
    <property type="project" value="PomBase"/>
</dbReference>
<dbReference type="GO" id="GO:0006338">
    <property type="term" value="P:chromatin remodeling"/>
    <property type="evidence" value="ECO:0000318"/>
    <property type="project" value="GO_Central"/>
</dbReference>
<dbReference type="GO" id="GO:0006355">
    <property type="term" value="P:regulation of DNA-templated transcription"/>
    <property type="evidence" value="ECO:0007669"/>
    <property type="project" value="InterPro"/>
</dbReference>
<dbReference type="GO" id="GO:0140673">
    <property type="term" value="P:transcription elongation-coupled chromatin remodeling"/>
    <property type="evidence" value="ECO:0000305"/>
    <property type="project" value="PomBase"/>
</dbReference>
<dbReference type="CDD" id="cd00200">
    <property type="entry name" value="WD40"/>
    <property type="match status" value="1"/>
</dbReference>
<dbReference type="FunFam" id="2.130.10.10:FF:000921">
    <property type="entry name" value="Protein HIR"/>
    <property type="match status" value="1"/>
</dbReference>
<dbReference type="FunFam" id="2.130.10.10:FF:001073">
    <property type="entry name" value="Protein HIR"/>
    <property type="match status" value="1"/>
</dbReference>
<dbReference type="Gene3D" id="2.130.10.10">
    <property type="entry name" value="YVTN repeat-like/Quinoprotein amine dehydrogenase"/>
    <property type="match status" value="2"/>
</dbReference>
<dbReference type="IDEAL" id="IID50259"/>
<dbReference type="InterPro" id="IPR055410">
    <property type="entry name" value="CAF1B_HIR1_beta-prop"/>
</dbReference>
<dbReference type="InterPro" id="IPR031120">
    <property type="entry name" value="HIR1-like"/>
</dbReference>
<dbReference type="InterPro" id="IPR011494">
    <property type="entry name" value="HIRA-like_C"/>
</dbReference>
<dbReference type="InterPro" id="IPR019015">
    <property type="entry name" value="HIRA_B_motif"/>
</dbReference>
<dbReference type="InterPro" id="IPR015943">
    <property type="entry name" value="WD40/YVTN_repeat-like_dom_sf"/>
</dbReference>
<dbReference type="InterPro" id="IPR036322">
    <property type="entry name" value="WD40_repeat_dom_sf"/>
</dbReference>
<dbReference type="InterPro" id="IPR001680">
    <property type="entry name" value="WD40_rpt"/>
</dbReference>
<dbReference type="PANTHER" id="PTHR13831">
    <property type="entry name" value="MEMBER OF THE HIR1 FAMILY OF WD-REPEAT PROTEINS"/>
    <property type="match status" value="1"/>
</dbReference>
<dbReference type="PANTHER" id="PTHR13831:SF0">
    <property type="entry name" value="PROTEIN HIRA"/>
    <property type="match status" value="1"/>
</dbReference>
<dbReference type="Pfam" id="PF24105">
    <property type="entry name" value="Beta-prop_CAF1B_HIR1"/>
    <property type="match status" value="1"/>
</dbReference>
<dbReference type="Pfam" id="PF07569">
    <property type="entry name" value="Hira"/>
    <property type="match status" value="1"/>
</dbReference>
<dbReference type="Pfam" id="PF09453">
    <property type="entry name" value="HIRA_B"/>
    <property type="match status" value="1"/>
</dbReference>
<dbReference type="SMART" id="SM00320">
    <property type="entry name" value="WD40"/>
    <property type="match status" value="6"/>
</dbReference>
<dbReference type="SUPFAM" id="SSF50978">
    <property type="entry name" value="WD40 repeat-like"/>
    <property type="match status" value="1"/>
</dbReference>
<dbReference type="PROSITE" id="PS00678">
    <property type="entry name" value="WD_REPEATS_1"/>
    <property type="match status" value="1"/>
</dbReference>
<dbReference type="PROSITE" id="PS50082">
    <property type="entry name" value="WD_REPEATS_2"/>
    <property type="match status" value="4"/>
</dbReference>
<dbReference type="PROSITE" id="PS50294">
    <property type="entry name" value="WD_REPEATS_REGION"/>
    <property type="match status" value="1"/>
</dbReference>
<proteinExistence type="evidence at protein level"/>
<evidence type="ECO:0000256" key="1">
    <source>
        <dbReference type="SAM" id="MobiDB-lite"/>
    </source>
</evidence>
<evidence type="ECO:0000269" key="2">
    <source>
    </source>
</evidence>
<evidence type="ECO:0000269" key="3">
    <source>
    </source>
</evidence>
<evidence type="ECO:0000305" key="4"/>
<evidence type="ECO:0007829" key="5">
    <source>
        <dbReference type="PDB" id="2Z34"/>
    </source>
</evidence>
<comment type="function">
    <text evidence="2 3">Probably required for replication-independent chromatin assembly. Required for transcriptional silencing in the outer repeat (otr) centromeric repeats and the Tf2 long terminal repeat retrotransposons. Repressor of histone gene transcription in G1 arrested cells. Required for repression of htb1 gene expression outside of S phase.</text>
</comment>
<comment type="subunit">
    <text evidence="2 3">Interacts with his3 and slm9.</text>
</comment>
<comment type="interaction">
    <interactant intactId="EBI-1556094">
        <id>P87314</id>
    </interactant>
    <interactant intactId="EBI-1556159">
        <id>P87315</id>
        <label>hip3</label>
    </interactant>
    <organismsDiffer>false</organismsDiffer>
    <experiments>2</experiments>
</comment>
<comment type="interaction">
    <interactant intactId="EBI-1556094">
        <id>P87314</id>
    </interactant>
    <interactant intactId="EBI-1556117">
        <id>O74309</id>
        <label>slm9</label>
    </interactant>
    <organismsDiffer>false</organismsDiffer>
    <experiments>4</experiments>
</comment>
<comment type="subcellular location">
    <subcellularLocation>
        <location>Cytoplasm</location>
    </subcellularLocation>
    <subcellularLocation>
        <location>Nucleus</location>
    </subcellularLocation>
</comment>
<comment type="similarity">
    <text evidence="4">Belongs to the WD repeat HIR1 family.</text>
</comment>
<gene>
    <name type="primary">hip1</name>
    <name type="synonym">hir1</name>
    <name type="ORF">SPBC31F10.13c</name>
</gene>
<feature type="chain" id="PRO_0000051023" description="Protein hir1">
    <location>
        <begin position="1"/>
        <end position="932"/>
    </location>
</feature>
<feature type="repeat" description="WD 1">
    <location>
        <begin position="16"/>
        <end position="55"/>
    </location>
</feature>
<feature type="repeat" description="WD 2">
    <location>
        <begin position="72"/>
        <end position="111"/>
    </location>
</feature>
<feature type="repeat" description="WD 3">
    <location>
        <begin position="132"/>
        <end position="171"/>
    </location>
</feature>
<feature type="repeat" description="WD 4">
    <location>
        <begin position="174"/>
        <end position="213"/>
    </location>
</feature>
<feature type="repeat" description="WD 5">
    <location>
        <begin position="222"/>
        <end position="265"/>
    </location>
</feature>
<feature type="repeat" description="WD 6">
    <location>
        <begin position="268"/>
        <end position="316"/>
    </location>
</feature>
<feature type="repeat" description="WD 7">
    <location>
        <begin position="320"/>
        <end position="361"/>
    </location>
</feature>
<feature type="region of interest" description="Disordered" evidence="1">
    <location>
        <begin position="405"/>
        <end position="470"/>
    </location>
</feature>
<feature type="region of interest" description="Disordered" evidence="1">
    <location>
        <begin position="498"/>
        <end position="520"/>
    </location>
</feature>
<feature type="compositionally biased region" description="Polar residues" evidence="1">
    <location>
        <begin position="405"/>
        <end position="426"/>
    </location>
</feature>
<feature type="compositionally biased region" description="Polar residues" evidence="1">
    <location>
        <begin position="441"/>
        <end position="453"/>
    </location>
</feature>
<feature type="compositionally biased region" description="Low complexity" evidence="1">
    <location>
        <begin position="498"/>
        <end position="507"/>
    </location>
</feature>
<feature type="strand" evidence="5">
    <location>
        <begin position="477"/>
        <end position="479"/>
    </location>
</feature>
<feature type="strand" evidence="5">
    <location>
        <begin position="485"/>
        <end position="487"/>
    </location>
</feature>
<feature type="strand" evidence="5">
    <location>
        <begin position="490"/>
        <end position="493"/>
    </location>
</feature>
<name>HIR1_SCHPO</name>
<keyword id="KW-0002">3D-structure</keyword>
<keyword id="KW-0156">Chromatin regulator</keyword>
<keyword id="KW-0963">Cytoplasm</keyword>
<keyword id="KW-0539">Nucleus</keyword>
<keyword id="KW-1185">Reference proteome</keyword>
<keyword id="KW-0677">Repeat</keyword>
<keyword id="KW-0678">Repressor</keyword>
<keyword id="KW-0804">Transcription</keyword>
<keyword id="KW-0805">Transcription regulation</keyword>
<keyword id="KW-0853">WD repeat</keyword>
<sequence>MKIKKIPWLGHFDDRGHRLSIFSIHIHPDGSRIATGGLDGTIRIWSTEAINRENENENENEDLPKQLCCMSTHTGTVTSVRFSPNGQYLASGSDDRVVIIWHKEEAIPGLGSTFGSGEKHTENWRSYRRLLGHDNDIQDLCWSYDSQLVVSVGLDSSIIVWNGTTFERLKRIEAHQSHVKGITFDPAGKYFATESDDRTIKVWRVSDFSIEKTITGPFNNSPLSTYFRRPSWSPDGKHIAAPNAMNGPVSCVSIIERGTWTSEINLIGHEGPVEVTAFNPKLFRDKNDKLVCILACGGQDRSLSIWSSALPRPLLSCQNVFQKSIGDVCWSPDGLSLFLCSYDGNVLVCTFEKEEFGDMVSDEEISKALAKYGHGRHGIVLPESAKQLELEETAYAILKKPSSLSTTDPTLVPQSSSTPKSAQKTPQKLPAFLPNRLTAETVDTNKLTASKEQIASPKRPGPSDNGNEIPTKFVQKVTITKEGKKRVAPQLLTTLSATPSTSRLASTQLQHTGSSQLPPQQFSQPINSLPKGGVPILIVGNKTKVNHENDESDQALQEEKIEEGLLKNYYSSLIDSSTSISNINFEAPRYKTNIVHSLNNEQKYVLEVKNGTSEKNPTRIVALENGNTKWMDYLPRPVILVTGSIHFWSIACDDGSLHLYSLTGSRLLPPIMIESKASFLHCNNAYLLCISSSGMVYAWNVVNKTALFTANSLAPILSRVSNNVTIENNSTDIPHVVIASISKEGVPSVTLSTGETYVYSSTMLCWQRITEPWWAIGSREWDSSGLLQSNTQTESQPLKIYEHRTNNVLMDSGRGKLLQKMVADAITEEGYDDFETIVTINHLENKIASARLLKLDDEFLVTSEVYVRLLMHHGLWQKLEEFLGELRTQTKCSIKLSGREVVAKMLVVLRQAVQTDNEFDRANKLIEKYAST</sequence>
<protein>
    <recommendedName>
        <fullName>Protein hir1</fullName>
    </recommendedName>
    <alternativeName>
        <fullName>Histone transcription regulator 1 homolog</fullName>
    </alternativeName>
</protein>